<sequence>MSTPTGQPIGLGLPDAPLPVLAPRRKTRQLMVGNVGVGSDYPVSVQSMTTTKTHDVNATLQQIAQLTASGCDIVRVACPKTVDAEALPAIAKKSPIPVIADIHFQPKYIFSAIDAGCAAVRVNPGNIKEFDGRVKEVAKAAGDAGIPIRIGVNAGSLDKRIMEKYGKATPEALVESALWEAGLFEDCGFGDIAISVKHNDPVIMVEAYRQLAAQSDYPLHLGVTEAGPAFQGTIKSSVAFGSLLSQGIGDTIRVSLSADPVEEIKVGDQILQSLNLRKRGLEIVSCPSCGRAQVDVYSLAEEVTAALDGMSIPLRVAVMGCVVNGPGEARDADLGVASGNGKGQIFVRGEVIKTVPESQIVETLIEEAVRLAEAEGLEIEEGAGPQVKITR</sequence>
<feature type="chain" id="PRO_0000190566" description="4-hydroxy-3-methylbut-2-en-1-yl diphosphate synthase (flavodoxin)">
    <location>
        <begin position="1"/>
        <end position="391"/>
    </location>
</feature>
<feature type="binding site" evidence="1">
    <location>
        <position position="286"/>
    </location>
    <ligand>
        <name>[4Fe-4S] cluster</name>
        <dbReference type="ChEBI" id="CHEBI:49883"/>
    </ligand>
</feature>
<feature type="binding site" evidence="1">
    <location>
        <position position="289"/>
    </location>
    <ligand>
        <name>[4Fe-4S] cluster</name>
        <dbReference type="ChEBI" id="CHEBI:49883"/>
    </ligand>
</feature>
<feature type="binding site" evidence="1">
    <location>
        <position position="321"/>
    </location>
    <ligand>
        <name>[4Fe-4S] cluster</name>
        <dbReference type="ChEBI" id="CHEBI:49883"/>
    </ligand>
</feature>
<feature type="binding site" evidence="1">
    <location>
        <position position="328"/>
    </location>
    <ligand>
        <name>[4Fe-4S] cluster</name>
        <dbReference type="ChEBI" id="CHEBI:49883"/>
    </ligand>
</feature>
<proteinExistence type="inferred from homology"/>
<comment type="function">
    <text evidence="1">Converts 2C-methyl-D-erythritol 2,4-cyclodiphosphate (ME-2,4cPP) into 1-hydroxy-2-methyl-2-(E)-butenyl 4-diphosphate.</text>
</comment>
<comment type="catalytic activity">
    <reaction evidence="1">
        <text>(2E)-4-hydroxy-3-methylbut-2-enyl diphosphate + oxidized [flavodoxin] + H2O + 2 H(+) = 2-C-methyl-D-erythritol 2,4-cyclic diphosphate + reduced [flavodoxin]</text>
        <dbReference type="Rhea" id="RHEA:43604"/>
        <dbReference type="Rhea" id="RHEA-COMP:10622"/>
        <dbReference type="Rhea" id="RHEA-COMP:10623"/>
        <dbReference type="ChEBI" id="CHEBI:15377"/>
        <dbReference type="ChEBI" id="CHEBI:15378"/>
        <dbReference type="ChEBI" id="CHEBI:57618"/>
        <dbReference type="ChEBI" id="CHEBI:58210"/>
        <dbReference type="ChEBI" id="CHEBI:58483"/>
        <dbReference type="ChEBI" id="CHEBI:128753"/>
        <dbReference type="EC" id="1.17.7.3"/>
    </reaction>
</comment>
<comment type="cofactor">
    <cofactor evidence="1">
        <name>[4Fe-4S] cluster</name>
        <dbReference type="ChEBI" id="CHEBI:49883"/>
    </cofactor>
    <text evidence="1">Binds 1 [4Fe-4S] cluster.</text>
</comment>
<comment type="pathway">
    <text evidence="1">Isoprenoid biosynthesis; isopentenyl diphosphate biosynthesis via DXP pathway; isopentenyl diphosphate from 1-deoxy-D-xylulose 5-phosphate: step 5/6.</text>
</comment>
<comment type="similarity">
    <text evidence="1">Belongs to the IspG family.</text>
</comment>
<evidence type="ECO:0000255" key="1">
    <source>
        <dbReference type="HAMAP-Rule" id="MF_00159"/>
    </source>
</evidence>
<gene>
    <name evidence="1" type="primary">ispG</name>
    <name type="synonym">gcpE</name>
    <name type="ordered locus">DIP1498</name>
</gene>
<reference key="1">
    <citation type="journal article" date="2003" name="Nucleic Acids Res.">
        <title>The complete genome sequence and analysis of Corynebacterium diphtheriae NCTC13129.</title>
        <authorList>
            <person name="Cerdeno-Tarraga A.-M."/>
            <person name="Efstratiou A."/>
            <person name="Dover L.G."/>
            <person name="Holden M.T.G."/>
            <person name="Pallen M.J."/>
            <person name="Bentley S.D."/>
            <person name="Besra G.S."/>
            <person name="Churcher C.M."/>
            <person name="James K.D."/>
            <person name="De Zoysa A."/>
            <person name="Chillingworth T."/>
            <person name="Cronin A."/>
            <person name="Dowd L."/>
            <person name="Feltwell T."/>
            <person name="Hamlin N."/>
            <person name="Holroyd S."/>
            <person name="Jagels K."/>
            <person name="Moule S."/>
            <person name="Quail M.A."/>
            <person name="Rabbinowitsch E."/>
            <person name="Rutherford K.M."/>
            <person name="Thomson N.R."/>
            <person name="Unwin L."/>
            <person name="Whitehead S."/>
            <person name="Barrell B.G."/>
            <person name="Parkhill J."/>
        </authorList>
    </citation>
    <scope>NUCLEOTIDE SEQUENCE [LARGE SCALE GENOMIC DNA]</scope>
    <source>
        <strain>ATCC 700971 / NCTC 13129 / Biotype gravis</strain>
    </source>
</reference>
<organism>
    <name type="scientific">Corynebacterium diphtheriae (strain ATCC 700971 / NCTC 13129 / Biotype gravis)</name>
    <dbReference type="NCBI Taxonomy" id="257309"/>
    <lineage>
        <taxon>Bacteria</taxon>
        <taxon>Bacillati</taxon>
        <taxon>Actinomycetota</taxon>
        <taxon>Actinomycetes</taxon>
        <taxon>Mycobacteriales</taxon>
        <taxon>Corynebacteriaceae</taxon>
        <taxon>Corynebacterium</taxon>
    </lineage>
</organism>
<keyword id="KW-0004">4Fe-4S</keyword>
<keyword id="KW-0408">Iron</keyword>
<keyword id="KW-0411">Iron-sulfur</keyword>
<keyword id="KW-0414">Isoprene biosynthesis</keyword>
<keyword id="KW-0479">Metal-binding</keyword>
<keyword id="KW-0560">Oxidoreductase</keyword>
<keyword id="KW-1185">Reference proteome</keyword>
<protein>
    <recommendedName>
        <fullName evidence="1">4-hydroxy-3-methylbut-2-en-1-yl diphosphate synthase (flavodoxin)</fullName>
        <ecNumber evidence="1">1.17.7.3</ecNumber>
    </recommendedName>
    <alternativeName>
        <fullName evidence="1">1-hydroxy-2-methyl-2-(E)-butenyl 4-diphosphate synthase</fullName>
    </alternativeName>
</protein>
<name>ISPG_CORDI</name>
<accession>Q6NGL3</accession>
<dbReference type="EC" id="1.17.7.3" evidence="1"/>
<dbReference type="EMBL" id="BX248358">
    <property type="protein sequence ID" value="CAE50025.1"/>
    <property type="molecule type" value="Genomic_DNA"/>
</dbReference>
<dbReference type="RefSeq" id="WP_010935106.1">
    <property type="nucleotide sequence ID" value="NC_002935.2"/>
</dbReference>
<dbReference type="SMR" id="Q6NGL3"/>
<dbReference type="STRING" id="257309.DIP1498"/>
<dbReference type="KEGG" id="cdi:DIP1498"/>
<dbReference type="HOGENOM" id="CLU_042258_0_0_11"/>
<dbReference type="UniPathway" id="UPA00056">
    <property type="reaction ID" value="UER00096"/>
</dbReference>
<dbReference type="Proteomes" id="UP000002198">
    <property type="component" value="Chromosome"/>
</dbReference>
<dbReference type="GO" id="GO:0051539">
    <property type="term" value="F:4 iron, 4 sulfur cluster binding"/>
    <property type="evidence" value="ECO:0007669"/>
    <property type="project" value="UniProtKB-UniRule"/>
</dbReference>
<dbReference type="GO" id="GO:0046429">
    <property type="term" value="F:4-hydroxy-3-methylbut-2-en-1-yl diphosphate synthase activity (ferredoxin)"/>
    <property type="evidence" value="ECO:0007669"/>
    <property type="project" value="UniProtKB-UniRule"/>
</dbReference>
<dbReference type="GO" id="GO:0141197">
    <property type="term" value="F:4-hydroxy-3-methylbut-2-enyl-diphosphate synthase activity (flavodoxin)"/>
    <property type="evidence" value="ECO:0007669"/>
    <property type="project" value="UniProtKB-EC"/>
</dbReference>
<dbReference type="GO" id="GO:0005506">
    <property type="term" value="F:iron ion binding"/>
    <property type="evidence" value="ECO:0007669"/>
    <property type="project" value="InterPro"/>
</dbReference>
<dbReference type="GO" id="GO:0019288">
    <property type="term" value="P:isopentenyl diphosphate biosynthetic process, methylerythritol 4-phosphate pathway"/>
    <property type="evidence" value="ECO:0007669"/>
    <property type="project" value="UniProtKB-UniRule"/>
</dbReference>
<dbReference type="GO" id="GO:0016114">
    <property type="term" value="P:terpenoid biosynthetic process"/>
    <property type="evidence" value="ECO:0007669"/>
    <property type="project" value="InterPro"/>
</dbReference>
<dbReference type="FunFam" id="3.20.20.20:FF:000001">
    <property type="entry name" value="4-hydroxy-3-methylbut-2-en-1-yl diphosphate synthase (flavodoxin)"/>
    <property type="match status" value="1"/>
</dbReference>
<dbReference type="Gene3D" id="3.20.20.20">
    <property type="entry name" value="Dihydropteroate synthase-like"/>
    <property type="match status" value="1"/>
</dbReference>
<dbReference type="Gene3D" id="3.30.413.10">
    <property type="entry name" value="Sulfite Reductase Hemoprotein, domain 1"/>
    <property type="match status" value="1"/>
</dbReference>
<dbReference type="HAMAP" id="MF_00159">
    <property type="entry name" value="IspG"/>
    <property type="match status" value="1"/>
</dbReference>
<dbReference type="InterPro" id="IPR011005">
    <property type="entry name" value="Dihydropteroate_synth-like_sf"/>
</dbReference>
<dbReference type="InterPro" id="IPR016425">
    <property type="entry name" value="IspG_bac"/>
</dbReference>
<dbReference type="InterPro" id="IPR004588">
    <property type="entry name" value="IspG_bac-typ"/>
</dbReference>
<dbReference type="InterPro" id="IPR045854">
    <property type="entry name" value="NO2/SO3_Rdtase_4Fe4S_sf"/>
</dbReference>
<dbReference type="NCBIfam" id="TIGR00612">
    <property type="entry name" value="ispG_gcpE"/>
    <property type="match status" value="1"/>
</dbReference>
<dbReference type="NCBIfam" id="NF001540">
    <property type="entry name" value="PRK00366.1"/>
    <property type="match status" value="1"/>
</dbReference>
<dbReference type="PANTHER" id="PTHR30454">
    <property type="entry name" value="4-HYDROXY-3-METHYLBUT-2-EN-1-YL DIPHOSPHATE SYNTHASE"/>
    <property type="match status" value="1"/>
</dbReference>
<dbReference type="PANTHER" id="PTHR30454:SF0">
    <property type="entry name" value="4-HYDROXY-3-METHYLBUT-2-EN-1-YL DIPHOSPHATE SYNTHASE (FERREDOXIN), CHLOROPLASTIC"/>
    <property type="match status" value="1"/>
</dbReference>
<dbReference type="Pfam" id="PF04551">
    <property type="entry name" value="GcpE"/>
    <property type="match status" value="1"/>
</dbReference>
<dbReference type="PIRSF" id="PIRSF004640">
    <property type="entry name" value="IspG"/>
    <property type="match status" value="1"/>
</dbReference>
<dbReference type="SUPFAM" id="SSF51717">
    <property type="entry name" value="Dihydropteroate synthetase-like"/>
    <property type="match status" value="1"/>
</dbReference>
<dbReference type="SUPFAM" id="SSF56014">
    <property type="entry name" value="Nitrite and sulphite reductase 4Fe-4S domain-like"/>
    <property type="match status" value="1"/>
</dbReference>